<organism>
    <name type="scientific">Clostridium botulinum (strain Okra / Type B1)</name>
    <dbReference type="NCBI Taxonomy" id="498213"/>
    <lineage>
        <taxon>Bacteria</taxon>
        <taxon>Bacillati</taxon>
        <taxon>Bacillota</taxon>
        <taxon>Clostridia</taxon>
        <taxon>Eubacteriales</taxon>
        <taxon>Clostridiaceae</taxon>
        <taxon>Clostridium</taxon>
    </lineage>
</organism>
<proteinExistence type="inferred from homology"/>
<gene>
    <name evidence="1" type="primary">mnmG</name>
    <name evidence="1" type="synonym">gidA</name>
    <name type="ordered locus">CLD_0832</name>
</gene>
<keyword id="KW-0963">Cytoplasm</keyword>
<keyword id="KW-0274">FAD</keyword>
<keyword id="KW-0285">Flavoprotein</keyword>
<keyword id="KW-0520">NAD</keyword>
<keyword id="KW-0819">tRNA processing</keyword>
<feature type="chain" id="PRO_0000345259" description="tRNA uridine 5-carboxymethylaminomethyl modification enzyme MnmG">
    <location>
        <begin position="1"/>
        <end position="625"/>
    </location>
</feature>
<feature type="binding site" evidence="1">
    <location>
        <begin position="14"/>
        <end position="19"/>
    </location>
    <ligand>
        <name>FAD</name>
        <dbReference type="ChEBI" id="CHEBI:57692"/>
    </ligand>
</feature>
<feature type="binding site" evidence="1">
    <location>
        <begin position="273"/>
        <end position="287"/>
    </location>
    <ligand>
        <name>NAD(+)</name>
        <dbReference type="ChEBI" id="CHEBI:57540"/>
    </ligand>
</feature>
<sequence>MKYLAGDFDVVVIGAGHAGCEAALASARMGCKTLICTMNLDSIALMACNPNIGGTAKGHLVREIDALGGEMGINIDHTFIQSRMLNTSKGPAVHSLRAQADKKRYSERMKHLLEKEENVVLRQLEVIEIDVEDNEVKGVLTKNGAYFTTKAIILCTGTYLKGKIIIGDIIYSSGPSGLYPANDLSQSLLNLGINLRRFKTGTPARINKRSVDFSKMIEQPGDEKIVPFSFIHNKLDKDQISCYLTYTSEETHKIIHENIHRSPLYNGSIEGVGPRYCPSIEDKIVRFPDKDKHQIFIEPEGENTEELYVGGMSSSLPEDVQIKMYRSVPGLENAEILRTAYAIEYDCIDPQQLDLTLEFKNINGLYGAGQFNGSSGYEEAAAQGLIAGINAVLKIKEKNPLILKRSDAYIGVLIDDLVTKGTNEPYRMMTSRAEYRLLLRQDNADLRLTELGYKVGLVKEDRYNKFLNRKKNVENEIERLRNMQITGKREINEFLLEKGSTELKKPISLYELIKRPELDYFKVEPLDDKRPSLSDDEKEEINIIAKYEGYINKQLEQVEQFKKYEDRLIPKSINYLDIKGLRLEAIQKLEKIKPINIGQASRISGVSPADISVLLIYMERKDREN</sequence>
<comment type="function">
    <text evidence="1">NAD-binding protein involved in the addition of a carboxymethylaminomethyl (cmnm) group at the wobble position (U34) of certain tRNAs, forming tRNA-cmnm(5)s(2)U34.</text>
</comment>
<comment type="cofactor">
    <cofactor evidence="1">
        <name>FAD</name>
        <dbReference type="ChEBI" id="CHEBI:57692"/>
    </cofactor>
</comment>
<comment type="subunit">
    <text evidence="1">Homodimer. Heterotetramer of two MnmE and two MnmG subunits.</text>
</comment>
<comment type="subcellular location">
    <subcellularLocation>
        <location evidence="1">Cytoplasm</location>
    </subcellularLocation>
</comment>
<comment type="similarity">
    <text evidence="1">Belongs to the MnmG family.</text>
</comment>
<dbReference type="EMBL" id="CP000939">
    <property type="protein sequence ID" value="ACA45135.1"/>
    <property type="molecule type" value="Genomic_DNA"/>
</dbReference>
<dbReference type="RefSeq" id="WP_015957795.1">
    <property type="nucleotide sequence ID" value="NC_010516.1"/>
</dbReference>
<dbReference type="SMR" id="B1IHR8"/>
<dbReference type="KEGG" id="cbb:CLD_0832"/>
<dbReference type="HOGENOM" id="CLU_007831_2_2_9"/>
<dbReference type="Proteomes" id="UP000008541">
    <property type="component" value="Chromosome"/>
</dbReference>
<dbReference type="GO" id="GO:0005829">
    <property type="term" value="C:cytosol"/>
    <property type="evidence" value="ECO:0007669"/>
    <property type="project" value="TreeGrafter"/>
</dbReference>
<dbReference type="GO" id="GO:0050660">
    <property type="term" value="F:flavin adenine dinucleotide binding"/>
    <property type="evidence" value="ECO:0007669"/>
    <property type="project" value="UniProtKB-UniRule"/>
</dbReference>
<dbReference type="GO" id="GO:0030488">
    <property type="term" value="P:tRNA methylation"/>
    <property type="evidence" value="ECO:0007669"/>
    <property type="project" value="TreeGrafter"/>
</dbReference>
<dbReference type="GO" id="GO:0002098">
    <property type="term" value="P:tRNA wobble uridine modification"/>
    <property type="evidence" value="ECO:0007669"/>
    <property type="project" value="InterPro"/>
</dbReference>
<dbReference type="FunFam" id="1.10.10.1800:FF:000001">
    <property type="entry name" value="tRNA uridine 5-carboxymethylaminomethyl modification enzyme MnmG"/>
    <property type="match status" value="1"/>
</dbReference>
<dbReference type="FunFam" id="1.10.150.570:FF:000001">
    <property type="entry name" value="tRNA uridine 5-carboxymethylaminomethyl modification enzyme MnmG"/>
    <property type="match status" value="1"/>
</dbReference>
<dbReference type="FunFam" id="3.50.50.60:FF:000002">
    <property type="entry name" value="tRNA uridine 5-carboxymethylaminomethyl modification enzyme MnmG"/>
    <property type="match status" value="1"/>
</dbReference>
<dbReference type="FunFam" id="3.50.50.60:FF:000063">
    <property type="entry name" value="tRNA uridine 5-carboxymethylaminomethyl modification enzyme MnmG"/>
    <property type="match status" value="1"/>
</dbReference>
<dbReference type="Gene3D" id="3.50.50.60">
    <property type="entry name" value="FAD/NAD(P)-binding domain"/>
    <property type="match status" value="2"/>
</dbReference>
<dbReference type="Gene3D" id="1.10.150.570">
    <property type="entry name" value="GidA associated domain, C-terminal subdomain"/>
    <property type="match status" value="1"/>
</dbReference>
<dbReference type="Gene3D" id="1.10.10.1800">
    <property type="entry name" value="tRNA uridine 5-carboxymethylaminomethyl modification enzyme MnmG/GidA"/>
    <property type="match status" value="1"/>
</dbReference>
<dbReference type="HAMAP" id="MF_00129">
    <property type="entry name" value="MnmG_GidA"/>
    <property type="match status" value="1"/>
</dbReference>
<dbReference type="InterPro" id="IPR036188">
    <property type="entry name" value="FAD/NAD-bd_sf"/>
</dbReference>
<dbReference type="InterPro" id="IPR049312">
    <property type="entry name" value="GIDA_C_N"/>
</dbReference>
<dbReference type="InterPro" id="IPR004416">
    <property type="entry name" value="MnmG"/>
</dbReference>
<dbReference type="InterPro" id="IPR002218">
    <property type="entry name" value="MnmG-rel"/>
</dbReference>
<dbReference type="InterPro" id="IPR020595">
    <property type="entry name" value="MnmG-rel_CS"/>
</dbReference>
<dbReference type="InterPro" id="IPR026904">
    <property type="entry name" value="MnmG_C"/>
</dbReference>
<dbReference type="InterPro" id="IPR047001">
    <property type="entry name" value="MnmG_C_subdom"/>
</dbReference>
<dbReference type="InterPro" id="IPR044920">
    <property type="entry name" value="MnmG_C_subdom_sf"/>
</dbReference>
<dbReference type="InterPro" id="IPR040131">
    <property type="entry name" value="MnmG_N"/>
</dbReference>
<dbReference type="NCBIfam" id="TIGR00136">
    <property type="entry name" value="mnmG_gidA"/>
    <property type="match status" value="1"/>
</dbReference>
<dbReference type="PANTHER" id="PTHR11806">
    <property type="entry name" value="GLUCOSE INHIBITED DIVISION PROTEIN A"/>
    <property type="match status" value="1"/>
</dbReference>
<dbReference type="PANTHER" id="PTHR11806:SF0">
    <property type="entry name" value="PROTEIN MTO1 HOMOLOG, MITOCHONDRIAL"/>
    <property type="match status" value="1"/>
</dbReference>
<dbReference type="Pfam" id="PF01134">
    <property type="entry name" value="GIDA"/>
    <property type="match status" value="1"/>
</dbReference>
<dbReference type="Pfam" id="PF21680">
    <property type="entry name" value="GIDA_C_1st"/>
    <property type="match status" value="1"/>
</dbReference>
<dbReference type="Pfam" id="PF13932">
    <property type="entry name" value="SAM_GIDA_C"/>
    <property type="match status" value="1"/>
</dbReference>
<dbReference type="PRINTS" id="PR00411">
    <property type="entry name" value="PNDRDTASEI"/>
</dbReference>
<dbReference type="SMART" id="SM01228">
    <property type="entry name" value="GIDA_assoc_3"/>
    <property type="match status" value="1"/>
</dbReference>
<dbReference type="SUPFAM" id="SSF51905">
    <property type="entry name" value="FAD/NAD(P)-binding domain"/>
    <property type="match status" value="1"/>
</dbReference>
<dbReference type="PROSITE" id="PS01280">
    <property type="entry name" value="GIDA_1"/>
    <property type="match status" value="1"/>
</dbReference>
<dbReference type="PROSITE" id="PS01281">
    <property type="entry name" value="GIDA_2"/>
    <property type="match status" value="1"/>
</dbReference>
<accession>B1IHR8</accession>
<evidence type="ECO:0000255" key="1">
    <source>
        <dbReference type="HAMAP-Rule" id="MF_00129"/>
    </source>
</evidence>
<reference key="1">
    <citation type="journal article" date="2007" name="PLoS ONE">
        <title>Analysis of the neurotoxin complex genes in Clostridium botulinum A1-A4 and B1 strains: BoNT/A3, /Ba4 and /B1 clusters are located within plasmids.</title>
        <authorList>
            <person name="Smith T.J."/>
            <person name="Hill K.K."/>
            <person name="Foley B.T."/>
            <person name="Detter J.C."/>
            <person name="Munk A.C."/>
            <person name="Bruce D.C."/>
            <person name="Doggett N.A."/>
            <person name="Smith L.A."/>
            <person name="Marks J.D."/>
            <person name="Xie G."/>
            <person name="Brettin T.S."/>
        </authorList>
    </citation>
    <scope>NUCLEOTIDE SEQUENCE [LARGE SCALE GENOMIC DNA]</scope>
    <source>
        <strain>Okra / Type B1</strain>
    </source>
</reference>
<protein>
    <recommendedName>
        <fullName evidence="1">tRNA uridine 5-carboxymethylaminomethyl modification enzyme MnmG</fullName>
    </recommendedName>
    <alternativeName>
        <fullName evidence="1">Glucose-inhibited division protein A</fullName>
    </alternativeName>
</protein>
<name>MNMG_CLOBK</name>